<accession>P0CS02</accession>
<accession>Q4JL68</accession>
<accession>Q55QM9</accession>
<accession>Q5KFI6</accession>
<feature type="chain" id="PRO_0000333520" description="GDP-mannose transporter 1">
    <location>
        <begin position="1"/>
        <end position="397"/>
    </location>
</feature>
<feature type="topological domain" description="Cytoplasmic" evidence="1">
    <location>
        <begin position="1"/>
        <end position="61"/>
    </location>
</feature>
<feature type="transmembrane region" description="Helical" evidence="2">
    <location>
        <begin position="62"/>
        <end position="82"/>
    </location>
</feature>
<feature type="topological domain" description="Lumenal" evidence="1">
    <location>
        <begin position="83"/>
        <end position="87"/>
    </location>
</feature>
<feature type="transmembrane region" description="Helical" evidence="2">
    <location>
        <begin position="88"/>
        <end position="108"/>
    </location>
</feature>
<feature type="topological domain" description="Cytoplasmic" evidence="1">
    <location>
        <begin position="109"/>
        <end position="124"/>
    </location>
</feature>
<feature type="transmembrane region" description="Helical" evidence="2">
    <location>
        <begin position="125"/>
        <end position="142"/>
    </location>
</feature>
<feature type="topological domain" description="Lumenal" evidence="1">
    <location>
        <begin position="143"/>
        <end position="145"/>
    </location>
</feature>
<feature type="transmembrane region" description="Helical" evidence="2">
    <location>
        <begin position="146"/>
        <end position="168"/>
    </location>
</feature>
<feature type="topological domain" description="Cytoplasmic" evidence="1">
    <location>
        <begin position="169"/>
        <end position="174"/>
    </location>
</feature>
<feature type="transmembrane region" description="Helical" evidence="2">
    <location>
        <begin position="175"/>
        <end position="197"/>
    </location>
</feature>
<feature type="topological domain" description="Lumenal" evidence="1">
    <location>
        <begin position="198"/>
        <end position="228"/>
    </location>
</feature>
<feature type="transmembrane region" description="Helical" evidence="2">
    <location>
        <begin position="229"/>
        <end position="249"/>
    </location>
</feature>
<feature type="topological domain" description="Cytoplasmic" evidence="1">
    <location>
        <begin position="250"/>
        <end position="272"/>
    </location>
</feature>
<feature type="transmembrane region" description="Helical" evidence="2">
    <location>
        <begin position="273"/>
        <end position="293"/>
    </location>
</feature>
<feature type="topological domain" description="Lumenal" evidence="1">
    <location>
        <begin position="294"/>
        <end position="300"/>
    </location>
</feature>
<feature type="transmembrane region" description="Helical" evidence="2">
    <location>
        <begin position="301"/>
        <end position="321"/>
    </location>
</feature>
<feature type="topological domain" description="Cytoplasmic" evidence="1">
    <location>
        <begin position="322"/>
        <end position="332"/>
    </location>
</feature>
<feature type="transmembrane region" description="Helical" evidence="2">
    <location>
        <begin position="333"/>
        <end position="353"/>
    </location>
</feature>
<feature type="topological domain" description="Lumenal" evidence="1">
    <location>
        <begin position="354"/>
        <end position="355"/>
    </location>
</feature>
<feature type="transmembrane region" description="Helical" evidence="2">
    <location>
        <begin position="356"/>
        <end position="376"/>
    </location>
</feature>
<feature type="topological domain" description="Cytoplasmic" evidence="1">
    <location>
        <begin position="377"/>
        <end position="397"/>
    </location>
</feature>
<feature type="region of interest" description="Disordered" evidence="3">
    <location>
        <begin position="1"/>
        <end position="57"/>
    </location>
</feature>
<feature type="compositionally biased region" description="Polar residues" evidence="3">
    <location>
        <begin position="9"/>
        <end position="19"/>
    </location>
</feature>
<feature type="compositionally biased region" description="Basic and acidic residues" evidence="3">
    <location>
        <begin position="34"/>
        <end position="54"/>
    </location>
</feature>
<feature type="glycosylation site" description="N-linked (GlcNAc...) asparagine" evidence="2">
    <location>
        <position position="87"/>
    </location>
</feature>
<name>GMT1_CRYNJ</name>
<reference key="1">
    <citation type="journal article" date="2007" name="Eukaryot. Cell">
        <title>The pathogenic fungus Cryptococcus neoformans expresses two functional GDP-mannose transporters with distinct expression patterns and roles in capsule synthesis.</title>
        <authorList>
            <person name="Cottrell T.R."/>
            <person name="Griffith C.L."/>
            <person name="Liu H."/>
            <person name="Nenninger A.A."/>
            <person name="Doering T.L."/>
        </authorList>
    </citation>
    <scope>NUCLEOTIDE SEQUENCE [MRNA]</scope>
    <scope>FUNCTION</scope>
</reference>
<reference key="2">
    <citation type="journal article" date="2005" name="Science">
        <title>The genome of the basidiomycetous yeast and human pathogen Cryptococcus neoformans.</title>
        <authorList>
            <person name="Loftus B.J."/>
            <person name="Fung E."/>
            <person name="Roncaglia P."/>
            <person name="Rowley D."/>
            <person name="Amedeo P."/>
            <person name="Bruno D."/>
            <person name="Vamathevan J."/>
            <person name="Miranda M."/>
            <person name="Anderson I.J."/>
            <person name="Fraser J.A."/>
            <person name="Allen J.E."/>
            <person name="Bosdet I.E."/>
            <person name="Brent M.R."/>
            <person name="Chiu R."/>
            <person name="Doering T.L."/>
            <person name="Donlin M.J."/>
            <person name="D'Souza C.A."/>
            <person name="Fox D.S."/>
            <person name="Grinberg V."/>
            <person name="Fu J."/>
            <person name="Fukushima M."/>
            <person name="Haas B.J."/>
            <person name="Huang J.C."/>
            <person name="Janbon G."/>
            <person name="Jones S.J.M."/>
            <person name="Koo H.L."/>
            <person name="Krzywinski M.I."/>
            <person name="Kwon-Chung K.J."/>
            <person name="Lengeler K.B."/>
            <person name="Maiti R."/>
            <person name="Marra M.A."/>
            <person name="Marra R.E."/>
            <person name="Mathewson C.A."/>
            <person name="Mitchell T.G."/>
            <person name="Pertea M."/>
            <person name="Riggs F.R."/>
            <person name="Salzberg S.L."/>
            <person name="Schein J.E."/>
            <person name="Shvartsbeyn A."/>
            <person name="Shin H."/>
            <person name="Shumway M."/>
            <person name="Specht C.A."/>
            <person name="Suh B.B."/>
            <person name="Tenney A."/>
            <person name="Utterback T.R."/>
            <person name="Wickes B.L."/>
            <person name="Wortman J.R."/>
            <person name="Wye N.H."/>
            <person name="Kronstad J.W."/>
            <person name="Lodge J.K."/>
            <person name="Heitman J."/>
            <person name="Davis R.W."/>
            <person name="Fraser C.M."/>
            <person name="Hyman R.W."/>
        </authorList>
    </citation>
    <scope>NUCLEOTIDE SEQUENCE [LARGE SCALE GENOMIC DNA]</scope>
    <source>
        <strain>JEC21 / ATCC MYA-565</strain>
    </source>
</reference>
<comment type="function">
    <text evidence="4">Involved in the import of GDP-mannose from the cytoplasm into the Golgi lumen. Involved in capsule synthesis.</text>
</comment>
<comment type="subunit">
    <text evidence="1">Homooligomer.</text>
</comment>
<comment type="subcellular location">
    <subcellularLocation>
        <location evidence="1">Golgi apparatus membrane</location>
        <topology evidence="1">Multi-pass membrane protein</topology>
    </subcellularLocation>
    <subcellularLocation>
        <location evidence="1">Cytoplasmic vesicle membrane</location>
        <topology evidence="1">Multi-pass membrane protein</topology>
    </subcellularLocation>
    <subcellularLocation>
        <location evidence="1">Endoplasmic reticulum membrane</location>
        <topology evidence="1">Multi-pass membrane protein</topology>
    </subcellularLocation>
</comment>
<comment type="similarity">
    <text evidence="5">Belongs to the TPT transporter family. SLC35D subfamily.</text>
</comment>
<keyword id="KW-0968">Cytoplasmic vesicle</keyword>
<keyword id="KW-0256">Endoplasmic reticulum</keyword>
<keyword id="KW-0325">Glycoprotein</keyword>
<keyword id="KW-0333">Golgi apparatus</keyword>
<keyword id="KW-0472">Membrane</keyword>
<keyword id="KW-1185">Reference proteome</keyword>
<keyword id="KW-0762">Sugar transport</keyword>
<keyword id="KW-0812">Transmembrane</keyword>
<keyword id="KW-1133">Transmembrane helix</keyword>
<keyword id="KW-0813">Transport</keyword>
<sequence>MSKPFVPTPNISRPATPSSLDYGKDEASSTLLRDMGERGDRERKDREERDKKEAMPSGQDQVLPILSYCAASIMMTVVNKYVVSGANFTMTFLLLAIQSSVCVLAVTTVKKLGFISFRDFDKNDAKAWWPISTLLVAVIYTGSKALQFLSIPVYTIFKNLTIILIAYGEVFMFNGAVSGLTLCSFALMVGSSIIAAWSDITSVWNKEPELDPITGLEITVGPVSTIGGLNAGYIWMALNCFVSAAYVLFMRKRIKVTGFKDWDSMYYNNLLSIPILVVFSLVIEDWGSESLALNFPASNRVLLLSAMAFSGAAAVFISYSTAWCVRITGSTTYSMVGALNKLPVAASGILFFGDPANFGNISAIAVGGVAGVVYAVAKTNQAKVEKARQARAAGGRP</sequence>
<organism>
    <name type="scientific">Cryptococcus neoformans var. neoformans serotype D (strain JEC21 / ATCC MYA-565)</name>
    <name type="common">Filobasidiella neoformans</name>
    <dbReference type="NCBI Taxonomy" id="214684"/>
    <lineage>
        <taxon>Eukaryota</taxon>
        <taxon>Fungi</taxon>
        <taxon>Dikarya</taxon>
        <taxon>Basidiomycota</taxon>
        <taxon>Agaricomycotina</taxon>
        <taxon>Tremellomycetes</taxon>
        <taxon>Tremellales</taxon>
        <taxon>Cryptococcaceae</taxon>
        <taxon>Cryptococcus</taxon>
        <taxon>Cryptococcus neoformans species complex</taxon>
    </lineage>
</organism>
<proteinExistence type="evidence at transcript level"/>
<protein>
    <recommendedName>
        <fullName>GDP-mannose transporter 1</fullName>
        <shortName>GMT 1</shortName>
    </recommendedName>
</protein>
<evidence type="ECO:0000250" key="1"/>
<evidence type="ECO:0000255" key="2"/>
<evidence type="ECO:0000256" key="3">
    <source>
        <dbReference type="SAM" id="MobiDB-lite"/>
    </source>
</evidence>
<evidence type="ECO:0000269" key="4">
    <source>
    </source>
</evidence>
<evidence type="ECO:0000305" key="5"/>
<gene>
    <name type="primary">GMT1</name>
    <name type="synonym">VRG4-1</name>
    <name type="ordered locus">CNF01620</name>
</gene>
<dbReference type="EMBL" id="DQ075902">
    <property type="protein sequence ID" value="AAY85624.1"/>
    <property type="molecule type" value="mRNA"/>
</dbReference>
<dbReference type="EMBL" id="AE017346">
    <property type="protein sequence ID" value="AAW44189.1"/>
    <property type="molecule type" value="Genomic_DNA"/>
</dbReference>
<dbReference type="RefSeq" id="XP_571496.1">
    <property type="nucleotide sequence ID" value="XM_571496.1"/>
</dbReference>
<dbReference type="SMR" id="P0CS02"/>
<dbReference type="FunCoup" id="P0CS02">
    <property type="interactions" value="179"/>
</dbReference>
<dbReference type="STRING" id="214684.P0CS02"/>
<dbReference type="TCDB" id="2.A.7.13.6">
    <property type="family name" value="the drug/metabolite transporter (dmt) superfamily"/>
</dbReference>
<dbReference type="GlyCosmos" id="P0CS02">
    <property type="glycosylation" value="1 site, No reported glycans"/>
</dbReference>
<dbReference type="PaxDb" id="214684-P0CS02"/>
<dbReference type="EnsemblFungi" id="AAW44189">
    <property type="protein sequence ID" value="AAW44189"/>
    <property type="gene ID" value="CNF01620"/>
</dbReference>
<dbReference type="GeneID" id="3258477"/>
<dbReference type="KEGG" id="cne:CNF01620"/>
<dbReference type="VEuPathDB" id="FungiDB:CNF01620"/>
<dbReference type="eggNOG" id="KOG1444">
    <property type="taxonomic scope" value="Eukaryota"/>
</dbReference>
<dbReference type="HOGENOM" id="CLU_025360_1_2_1"/>
<dbReference type="InParanoid" id="P0CS02"/>
<dbReference type="OMA" id="KLIRVWI"/>
<dbReference type="OrthoDB" id="417037at2759"/>
<dbReference type="PHI-base" id="PHI:3489"/>
<dbReference type="Proteomes" id="UP000002149">
    <property type="component" value="Chromosome 6"/>
</dbReference>
<dbReference type="GO" id="GO:0030659">
    <property type="term" value="C:cytoplasmic vesicle membrane"/>
    <property type="evidence" value="ECO:0007669"/>
    <property type="project" value="UniProtKB-SubCell"/>
</dbReference>
<dbReference type="GO" id="GO:0005789">
    <property type="term" value="C:endoplasmic reticulum membrane"/>
    <property type="evidence" value="ECO:0007669"/>
    <property type="project" value="UniProtKB-SubCell"/>
</dbReference>
<dbReference type="GO" id="GO:0005794">
    <property type="term" value="C:Golgi apparatus"/>
    <property type="evidence" value="ECO:0000318"/>
    <property type="project" value="GO_Central"/>
</dbReference>
<dbReference type="GO" id="GO:0000139">
    <property type="term" value="C:Golgi membrane"/>
    <property type="evidence" value="ECO:0007669"/>
    <property type="project" value="UniProtKB-SubCell"/>
</dbReference>
<dbReference type="GO" id="GO:0015297">
    <property type="term" value="F:antiporter activity"/>
    <property type="evidence" value="ECO:0000318"/>
    <property type="project" value="GO_Central"/>
</dbReference>
<dbReference type="GO" id="GO:0005458">
    <property type="term" value="F:GDP-mannose transmembrane transporter activity"/>
    <property type="evidence" value="ECO:0000318"/>
    <property type="project" value="GO_Central"/>
</dbReference>
<dbReference type="GO" id="GO:1990570">
    <property type="term" value="P:GDP-mannose transmembrane transport"/>
    <property type="evidence" value="ECO:0000318"/>
    <property type="project" value="GO_Central"/>
</dbReference>
<dbReference type="InterPro" id="IPR050186">
    <property type="entry name" value="TPT_transporter"/>
</dbReference>
<dbReference type="NCBIfam" id="TIGR00803">
    <property type="entry name" value="nst"/>
    <property type="match status" value="1"/>
</dbReference>
<dbReference type="PANTHER" id="PTHR11132">
    <property type="entry name" value="SOLUTE CARRIER FAMILY 35"/>
    <property type="match status" value="1"/>
</dbReference>